<gene>
    <name evidence="1" type="primary">gloB</name>
    <name type="ordered locus">BBta_7609</name>
</gene>
<feature type="chain" id="PRO_0000309629" description="Hydroxyacylglutathione hydrolase">
    <location>
        <begin position="1"/>
        <end position="255"/>
    </location>
</feature>
<feature type="binding site" evidence="1">
    <location>
        <position position="56"/>
    </location>
    <ligand>
        <name>Zn(2+)</name>
        <dbReference type="ChEBI" id="CHEBI:29105"/>
        <label>1</label>
    </ligand>
</feature>
<feature type="binding site" evidence="1">
    <location>
        <position position="58"/>
    </location>
    <ligand>
        <name>Zn(2+)</name>
        <dbReference type="ChEBI" id="CHEBI:29105"/>
        <label>1</label>
    </ligand>
</feature>
<feature type="binding site" evidence="1">
    <location>
        <position position="60"/>
    </location>
    <ligand>
        <name>Zn(2+)</name>
        <dbReference type="ChEBI" id="CHEBI:29105"/>
        <label>2</label>
    </ligand>
</feature>
<feature type="binding site" evidence="1">
    <location>
        <position position="61"/>
    </location>
    <ligand>
        <name>Zn(2+)</name>
        <dbReference type="ChEBI" id="CHEBI:29105"/>
        <label>2</label>
    </ligand>
</feature>
<feature type="binding site" evidence="1">
    <location>
        <position position="114"/>
    </location>
    <ligand>
        <name>Zn(2+)</name>
        <dbReference type="ChEBI" id="CHEBI:29105"/>
        <label>1</label>
    </ligand>
</feature>
<feature type="binding site" evidence="1">
    <location>
        <position position="133"/>
    </location>
    <ligand>
        <name>Zn(2+)</name>
        <dbReference type="ChEBI" id="CHEBI:29105"/>
        <label>1</label>
    </ligand>
</feature>
<feature type="binding site" evidence="1">
    <location>
        <position position="133"/>
    </location>
    <ligand>
        <name>Zn(2+)</name>
        <dbReference type="ChEBI" id="CHEBI:29105"/>
        <label>2</label>
    </ligand>
</feature>
<feature type="binding site" evidence="1">
    <location>
        <position position="171"/>
    </location>
    <ligand>
        <name>Zn(2+)</name>
        <dbReference type="ChEBI" id="CHEBI:29105"/>
        <label>2</label>
    </ligand>
</feature>
<name>GLO2_BRASB</name>
<keyword id="KW-0378">Hydrolase</keyword>
<keyword id="KW-0479">Metal-binding</keyword>
<keyword id="KW-1185">Reference proteome</keyword>
<keyword id="KW-0862">Zinc</keyword>
<comment type="function">
    <text evidence="1">Thiolesterase that catalyzes the hydrolysis of S-D-lactoyl-glutathione to form glutathione and D-lactic acid.</text>
</comment>
<comment type="catalytic activity">
    <reaction evidence="1">
        <text>an S-(2-hydroxyacyl)glutathione + H2O = a 2-hydroxy carboxylate + glutathione + H(+)</text>
        <dbReference type="Rhea" id="RHEA:21864"/>
        <dbReference type="ChEBI" id="CHEBI:15377"/>
        <dbReference type="ChEBI" id="CHEBI:15378"/>
        <dbReference type="ChEBI" id="CHEBI:57925"/>
        <dbReference type="ChEBI" id="CHEBI:58896"/>
        <dbReference type="ChEBI" id="CHEBI:71261"/>
        <dbReference type="EC" id="3.1.2.6"/>
    </reaction>
</comment>
<comment type="cofactor">
    <cofactor evidence="1">
        <name>Zn(2+)</name>
        <dbReference type="ChEBI" id="CHEBI:29105"/>
    </cofactor>
    <text evidence="1">Binds 2 Zn(2+) ions per subunit.</text>
</comment>
<comment type="pathway">
    <text evidence="1">Secondary metabolite metabolism; methylglyoxal degradation; (R)-lactate from methylglyoxal: step 2/2.</text>
</comment>
<comment type="subunit">
    <text evidence="1">Monomer.</text>
</comment>
<comment type="similarity">
    <text evidence="1">Belongs to the metallo-beta-lactamase superfamily. Glyoxalase II family.</text>
</comment>
<accession>A5ETG1</accession>
<evidence type="ECO:0000255" key="1">
    <source>
        <dbReference type="HAMAP-Rule" id="MF_01374"/>
    </source>
</evidence>
<dbReference type="EC" id="3.1.2.6" evidence="1"/>
<dbReference type="EMBL" id="CP000494">
    <property type="protein sequence ID" value="ABQ39455.1"/>
    <property type="molecule type" value="Genomic_DNA"/>
</dbReference>
<dbReference type="RefSeq" id="WP_012047346.1">
    <property type="nucleotide sequence ID" value="NC_009485.1"/>
</dbReference>
<dbReference type="SMR" id="A5ETG1"/>
<dbReference type="STRING" id="288000.BBta_7609"/>
<dbReference type="KEGG" id="bbt:BBta_7609"/>
<dbReference type="eggNOG" id="COG0491">
    <property type="taxonomic scope" value="Bacteria"/>
</dbReference>
<dbReference type="HOGENOM" id="CLU_030571_4_1_5"/>
<dbReference type="OrthoDB" id="9802248at2"/>
<dbReference type="UniPathway" id="UPA00619">
    <property type="reaction ID" value="UER00676"/>
</dbReference>
<dbReference type="Proteomes" id="UP000000246">
    <property type="component" value="Chromosome"/>
</dbReference>
<dbReference type="GO" id="GO:0004416">
    <property type="term" value="F:hydroxyacylglutathione hydrolase activity"/>
    <property type="evidence" value="ECO:0007669"/>
    <property type="project" value="UniProtKB-UniRule"/>
</dbReference>
<dbReference type="GO" id="GO:0046872">
    <property type="term" value="F:metal ion binding"/>
    <property type="evidence" value="ECO:0007669"/>
    <property type="project" value="UniProtKB-KW"/>
</dbReference>
<dbReference type="GO" id="GO:0019243">
    <property type="term" value="P:methylglyoxal catabolic process to D-lactate via S-lactoyl-glutathione"/>
    <property type="evidence" value="ECO:0007669"/>
    <property type="project" value="InterPro"/>
</dbReference>
<dbReference type="CDD" id="cd07723">
    <property type="entry name" value="hydroxyacylglutathione_hydrolase_MBL-fold"/>
    <property type="match status" value="1"/>
</dbReference>
<dbReference type="Gene3D" id="3.60.15.10">
    <property type="entry name" value="Ribonuclease Z/Hydroxyacylglutathione hydrolase-like"/>
    <property type="match status" value="1"/>
</dbReference>
<dbReference type="HAMAP" id="MF_01374">
    <property type="entry name" value="Glyoxalase_2"/>
    <property type="match status" value="1"/>
</dbReference>
<dbReference type="InterPro" id="IPR035680">
    <property type="entry name" value="Clx_II_MBL"/>
</dbReference>
<dbReference type="InterPro" id="IPR050110">
    <property type="entry name" value="Glyoxalase_II_hydrolase"/>
</dbReference>
<dbReference type="InterPro" id="IPR032282">
    <property type="entry name" value="HAGH_C"/>
</dbReference>
<dbReference type="InterPro" id="IPR017782">
    <property type="entry name" value="Hydroxyacylglutathione_Hdrlase"/>
</dbReference>
<dbReference type="InterPro" id="IPR001279">
    <property type="entry name" value="Metallo-B-lactamas"/>
</dbReference>
<dbReference type="InterPro" id="IPR036866">
    <property type="entry name" value="RibonucZ/Hydroxyglut_hydro"/>
</dbReference>
<dbReference type="NCBIfam" id="TIGR03413">
    <property type="entry name" value="GSH_gloB"/>
    <property type="match status" value="1"/>
</dbReference>
<dbReference type="PANTHER" id="PTHR43705">
    <property type="entry name" value="HYDROXYACYLGLUTATHIONE HYDROLASE"/>
    <property type="match status" value="1"/>
</dbReference>
<dbReference type="PANTHER" id="PTHR43705:SF1">
    <property type="entry name" value="HYDROXYACYLGLUTATHIONE HYDROLASE GLOB"/>
    <property type="match status" value="1"/>
</dbReference>
<dbReference type="Pfam" id="PF16123">
    <property type="entry name" value="HAGH_C"/>
    <property type="match status" value="1"/>
</dbReference>
<dbReference type="Pfam" id="PF00753">
    <property type="entry name" value="Lactamase_B"/>
    <property type="match status" value="1"/>
</dbReference>
<dbReference type="PIRSF" id="PIRSF005457">
    <property type="entry name" value="Glx"/>
    <property type="match status" value="1"/>
</dbReference>
<dbReference type="SMART" id="SM00849">
    <property type="entry name" value="Lactamase_B"/>
    <property type="match status" value="1"/>
</dbReference>
<dbReference type="SUPFAM" id="SSF56281">
    <property type="entry name" value="Metallo-hydrolase/oxidoreductase"/>
    <property type="match status" value="1"/>
</dbReference>
<sequence length="255" mass="27825">MAADIRVFTCLSDNFGYLIHDPATGATASVDAPEAGPIIRQLEAAGWTLTDILITHHHHDHVGAVAELKQKYGCRVVAPHDKTTAIADVDLRVGHGDVIKVGELLARVLETPGHTLDHVSYVFDADKAVFAADTLFSVGCGRVFEGTYPMMWDSLLKLRALPDDFRLYCGHEYTASNVKFALTVDGDNEALKARAAEVTRLRAANESTIPSLLGDEKQTNVFLRADDPAVAIKLRMKGATAEQVFGELRERKNKS</sequence>
<reference key="1">
    <citation type="journal article" date="2007" name="Science">
        <title>Legumes symbioses: absence of nod genes in photosynthetic bradyrhizobia.</title>
        <authorList>
            <person name="Giraud E."/>
            <person name="Moulin L."/>
            <person name="Vallenet D."/>
            <person name="Barbe V."/>
            <person name="Cytryn E."/>
            <person name="Avarre J.-C."/>
            <person name="Jaubert M."/>
            <person name="Simon D."/>
            <person name="Cartieaux F."/>
            <person name="Prin Y."/>
            <person name="Bena G."/>
            <person name="Hannibal L."/>
            <person name="Fardoux J."/>
            <person name="Kojadinovic M."/>
            <person name="Vuillet L."/>
            <person name="Lajus A."/>
            <person name="Cruveiller S."/>
            <person name="Rouy Z."/>
            <person name="Mangenot S."/>
            <person name="Segurens B."/>
            <person name="Dossat C."/>
            <person name="Franck W.L."/>
            <person name="Chang W.-S."/>
            <person name="Saunders E."/>
            <person name="Bruce D."/>
            <person name="Richardson P."/>
            <person name="Normand P."/>
            <person name="Dreyfus B."/>
            <person name="Pignol D."/>
            <person name="Stacey G."/>
            <person name="Emerich D."/>
            <person name="Vermeglio A."/>
            <person name="Medigue C."/>
            <person name="Sadowsky M."/>
        </authorList>
    </citation>
    <scope>NUCLEOTIDE SEQUENCE [LARGE SCALE GENOMIC DNA]</scope>
    <source>
        <strain>BTAi1 / ATCC BAA-1182</strain>
    </source>
</reference>
<proteinExistence type="inferred from homology"/>
<protein>
    <recommendedName>
        <fullName evidence="1">Hydroxyacylglutathione hydrolase</fullName>
        <ecNumber evidence="1">3.1.2.6</ecNumber>
    </recommendedName>
    <alternativeName>
        <fullName evidence="1">Glyoxalase II</fullName>
        <shortName evidence="1">Glx II</shortName>
    </alternativeName>
</protein>
<organism>
    <name type="scientific">Bradyrhizobium sp. (strain BTAi1 / ATCC BAA-1182)</name>
    <dbReference type="NCBI Taxonomy" id="288000"/>
    <lineage>
        <taxon>Bacteria</taxon>
        <taxon>Pseudomonadati</taxon>
        <taxon>Pseudomonadota</taxon>
        <taxon>Alphaproteobacteria</taxon>
        <taxon>Hyphomicrobiales</taxon>
        <taxon>Nitrobacteraceae</taxon>
        <taxon>Bradyrhizobium</taxon>
    </lineage>
</organism>